<geneLocation type="mitochondrion"/>
<accession>Q539B4</accession>
<organism>
    <name type="scientific">Notiosorex cockrumi</name>
    <name type="common">Cockrum's desert shrew</name>
    <dbReference type="NCBI Taxonomy" id="234934"/>
    <lineage>
        <taxon>Eukaryota</taxon>
        <taxon>Metazoa</taxon>
        <taxon>Chordata</taxon>
        <taxon>Craniata</taxon>
        <taxon>Vertebrata</taxon>
        <taxon>Euteleostomi</taxon>
        <taxon>Mammalia</taxon>
        <taxon>Eutheria</taxon>
        <taxon>Laurasiatheria</taxon>
        <taxon>Eulipotyphla</taxon>
        <taxon>Soricidae</taxon>
        <taxon>Soricinae</taxon>
        <taxon>Notiosorex</taxon>
    </lineage>
</organism>
<evidence type="ECO:0000250" key="1"/>
<evidence type="ECO:0000250" key="2">
    <source>
        <dbReference type="UniProtKB" id="P00157"/>
    </source>
</evidence>
<evidence type="ECO:0000255" key="3">
    <source>
        <dbReference type="PROSITE-ProRule" id="PRU00967"/>
    </source>
</evidence>
<evidence type="ECO:0000255" key="4">
    <source>
        <dbReference type="PROSITE-ProRule" id="PRU00968"/>
    </source>
</evidence>
<comment type="function">
    <text evidence="2">Component of the ubiquinol-cytochrome c reductase complex (complex III or cytochrome b-c1 complex) that is part of the mitochondrial respiratory chain. The b-c1 complex mediates electron transfer from ubiquinol to cytochrome c. Contributes to the generation of a proton gradient across the mitochondrial membrane that is then used for ATP synthesis.</text>
</comment>
<comment type="cofactor">
    <cofactor evidence="2">
        <name>heme b</name>
        <dbReference type="ChEBI" id="CHEBI:60344"/>
    </cofactor>
    <text evidence="2">Binds 2 heme b groups non-covalently.</text>
</comment>
<comment type="subunit">
    <text evidence="2">The cytochrome bc1 complex contains 11 subunits: 3 respiratory subunits (MT-CYB, CYC1 and UQCRFS1), 2 core proteins (UQCRC1 and UQCRC2) and 6 low-molecular weight proteins (UQCRH/QCR6, UQCRB/QCR7, UQCRQ/QCR8, UQCR10/QCR9, UQCR11/QCR10 and a cleavage product of UQCRFS1). This cytochrome bc1 complex then forms a dimer.</text>
</comment>
<comment type="subcellular location">
    <subcellularLocation>
        <location evidence="2">Mitochondrion inner membrane</location>
        <topology evidence="2">Multi-pass membrane protein</topology>
    </subcellularLocation>
</comment>
<comment type="miscellaneous">
    <text evidence="1">Heme 1 (or BL or b562) is low-potential and absorbs at about 562 nm, and heme 2 (or BH or b566) is high-potential and absorbs at about 566 nm.</text>
</comment>
<comment type="similarity">
    <text evidence="3 4">Belongs to the cytochrome b family.</text>
</comment>
<comment type="caution">
    <text evidence="2">The full-length protein contains only eight transmembrane helices, not nine as predicted by bioinformatics tools.</text>
</comment>
<dbReference type="EMBL" id="AY611565">
    <property type="protein sequence ID" value="AAV35152.1"/>
    <property type="molecule type" value="Genomic_DNA"/>
</dbReference>
<dbReference type="EMBL" id="AY611567">
    <property type="protein sequence ID" value="AAV35154.1"/>
    <property type="molecule type" value="Genomic_DNA"/>
</dbReference>
<dbReference type="EMBL" id="AY611572">
    <property type="protein sequence ID" value="AAV35159.1"/>
    <property type="molecule type" value="Genomic_DNA"/>
</dbReference>
<dbReference type="EMBL" id="AY611574">
    <property type="protein sequence ID" value="AAV35161.1"/>
    <property type="molecule type" value="Genomic_DNA"/>
</dbReference>
<dbReference type="SMR" id="Q539B4"/>
<dbReference type="GO" id="GO:0005743">
    <property type="term" value="C:mitochondrial inner membrane"/>
    <property type="evidence" value="ECO:0007669"/>
    <property type="project" value="UniProtKB-SubCell"/>
</dbReference>
<dbReference type="GO" id="GO:0045275">
    <property type="term" value="C:respiratory chain complex III"/>
    <property type="evidence" value="ECO:0007669"/>
    <property type="project" value="InterPro"/>
</dbReference>
<dbReference type="GO" id="GO:0046872">
    <property type="term" value="F:metal ion binding"/>
    <property type="evidence" value="ECO:0007669"/>
    <property type="project" value="UniProtKB-KW"/>
</dbReference>
<dbReference type="GO" id="GO:0008121">
    <property type="term" value="F:ubiquinol-cytochrome-c reductase activity"/>
    <property type="evidence" value="ECO:0007669"/>
    <property type="project" value="InterPro"/>
</dbReference>
<dbReference type="GO" id="GO:0006122">
    <property type="term" value="P:mitochondrial electron transport, ubiquinol to cytochrome c"/>
    <property type="evidence" value="ECO:0007669"/>
    <property type="project" value="TreeGrafter"/>
</dbReference>
<dbReference type="CDD" id="cd00290">
    <property type="entry name" value="cytochrome_b_C"/>
    <property type="match status" value="1"/>
</dbReference>
<dbReference type="CDD" id="cd00284">
    <property type="entry name" value="Cytochrome_b_N"/>
    <property type="match status" value="1"/>
</dbReference>
<dbReference type="FunFam" id="1.20.810.10:FF:000002">
    <property type="entry name" value="Cytochrome b"/>
    <property type="match status" value="1"/>
</dbReference>
<dbReference type="Gene3D" id="1.20.810.10">
    <property type="entry name" value="Cytochrome Bc1 Complex, Chain C"/>
    <property type="match status" value="1"/>
</dbReference>
<dbReference type="InterPro" id="IPR005798">
    <property type="entry name" value="Cyt_b/b6_C"/>
</dbReference>
<dbReference type="InterPro" id="IPR036150">
    <property type="entry name" value="Cyt_b/b6_C_sf"/>
</dbReference>
<dbReference type="InterPro" id="IPR005797">
    <property type="entry name" value="Cyt_b/b6_N"/>
</dbReference>
<dbReference type="InterPro" id="IPR027387">
    <property type="entry name" value="Cytb/b6-like_sf"/>
</dbReference>
<dbReference type="InterPro" id="IPR030689">
    <property type="entry name" value="Cytochrome_b"/>
</dbReference>
<dbReference type="InterPro" id="IPR048260">
    <property type="entry name" value="Cytochrome_b_C_euk/bac"/>
</dbReference>
<dbReference type="InterPro" id="IPR048259">
    <property type="entry name" value="Cytochrome_b_N_euk/bac"/>
</dbReference>
<dbReference type="InterPro" id="IPR016174">
    <property type="entry name" value="Di-haem_cyt_TM"/>
</dbReference>
<dbReference type="PANTHER" id="PTHR19271">
    <property type="entry name" value="CYTOCHROME B"/>
    <property type="match status" value="1"/>
</dbReference>
<dbReference type="PANTHER" id="PTHR19271:SF16">
    <property type="entry name" value="CYTOCHROME B"/>
    <property type="match status" value="1"/>
</dbReference>
<dbReference type="Pfam" id="PF00032">
    <property type="entry name" value="Cytochrom_B_C"/>
    <property type="match status" value="1"/>
</dbReference>
<dbReference type="Pfam" id="PF00033">
    <property type="entry name" value="Cytochrome_B"/>
    <property type="match status" value="1"/>
</dbReference>
<dbReference type="PIRSF" id="PIRSF038885">
    <property type="entry name" value="COB"/>
    <property type="match status" value="1"/>
</dbReference>
<dbReference type="SUPFAM" id="SSF81648">
    <property type="entry name" value="a domain/subunit of cytochrome bc1 complex (Ubiquinol-cytochrome c reductase)"/>
    <property type="match status" value="1"/>
</dbReference>
<dbReference type="SUPFAM" id="SSF81342">
    <property type="entry name" value="Transmembrane di-heme cytochromes"/>
    <property type="match status" value="1"/>
</dbReference>
<dbReference type="PROSITE" id="PS51003">
    <property type="entry name" value="CYTB_CTER"/>
    <property type="match status" value="1"/>
</dbReference>
<dbReference type="PROSITE" id="PS51002">
    <property type="entry name" value="CYTB_NTER"/>
    <property type="match status" value="1"/>
</dbReference>
<keyword id="KW-0249">Electron transport</keyword>
<keyword id="KW-0349">Heme</keyword>
<keyword id="KW-0408">Iron</keyword>
<keyword id="KW-0472">Membrane</keyword>
<keyword id="KW-0479">Metal-binding</keyword>
<keyword id="KW-0496">Mitochondrion</keyword>
<keyword id="KW-0999">Mitochondrion inner membrane</keyword>
<keyword id="KW-0679">Respiratory chain</keyword>
<keyword id="KW-0812">Transmembrane</keyword>
<keyword id="KW-1133">Transmembrane helix</keyword>
<keyword id="KW-0813">Transport</keyword>
<keyword id="KW-0830">Ubiquinone</keyword>
<protein>
    <recommendedName>
        <fullName>Cytochrome b</fullName>
    </recommendedName>
    <alternativeName>
        <fullName>Complex III subunit 3</fullName>
    </alternativeName>
    <alternativeName>
        <fullName>Complex III subunit III</fullName>
    </alternativeName>
    <alternativeName>
        <fullName>Cytochrome b-c1 complex subunit 3</fullName>
    </alternativeName>
    <alternativeName>
        <fullName>Ubiquinol-cytochrome-c reductase complex cytochrome b subunit</fullName>
    </alternativeName>
</protein>
<name>CYB_NOTCC</name>
<feature type="chain" id="PRO_0000254740" description="Cytochrome b">
    <location>
        <begin position="1"/>
        <end position="379"/>
    </location>
</feature>
<feature type="transmembrane region" description="Helical" evidence="2">
    <location>
        <begin position="33"/>
        <end position="53"/>
    </location>
</feature>
<feature type="transmembrane region" description="Helical" evidence="2">
    <location>
        <begin position="77"/>
        <end position="98"/>
    </location>
</feature>
<feature type="transmembrane region" description="Helical" evidence="2">
    <location>
        <begin position="113"/>
        <end position="133"/>
    </location>
</feature>
<feature type="transmembrane region" description="Helical" evidence="2">
    <location>
        <begin position="178"/>
        <end position="198"/>
    </location>
</feature>
<feature type="transmembrane region" description="Helical" evidence="2">
    <location>
        <begin position="226"/>
        <end position="246"/>
    </location>
</feature>
<feature type="transmembrane region" description="Helical" evidence="2">
    <location>
        <begin position="288"/>
        <end position="308"/>
    </location>
</feature>
<feature type="transmembrane region" description="Helical" evidence="2">
    <location>
        <begin position="320"/>
        <end position="340"/>
    </location>
</feature>
<feature type="transmembrane region" description="Helical" evidence="2">
    <location>
        <begin position="347"/>
        <end position="367"/>
    </location>
</feature>
<feature type="binding site" description="axial binding residue" evidence="2">
    <location>
        <position position="83"/>
    </location>
    <ligand>
        <name>heme b</name>
        <dbReference type="ChEBI" id="CHEBI:60344"/>
        <label>b562</label>
    </ligand>
    <ligandPart>
        <name>Fe</name>
        <dbReference type="ChEBI" id="CHEBI:18248"/>
    </ligandPart>
</feature>
<feature type="binding site" description="axial binding residue" evidence="2">
    <location>
        <position position="97"/>
    </location>
    <ligand>
        <name>heme b</name>
        <dbReference type="ChEBI" id="CHEBI:60344"/>
        <label>b566</label>
    </ligand>
    <ligandPart>
        <name>Fe</name>
        <dbReference type="ChEBI" id="CHEBI:18248"/>
    </ligandPart>
</feature>
<feature type="binding site" description="axial binding residue" evidence="2">
    <location>
        <position position="182"/>
    </location>
    <ligand>
        <name>heme b</name>
        <dbReference type="ChEBI" id="CHEBI:60344"/>
        <label>b562</label>
    </ligand>
    <ligandPart>
        <name>Fe</name>
        <dbReference type="ChEBI" id="CHEBI:18248"/>
    </ligandPart>
</feature>
<feature type="binding site" description="axial binding residue" evidence="2">
    <location>
        <position position="196"/>
    </location>
    <ligand>
        <name>heme b</name>
        <dbReference type="ChEBI" id="CHEBI:60344"/>
        <label>b566</label>
    </ligand>
    <ligandPart>
        <name>Fe</name>
        <dbReference type="ChEBI" id="CHEBI:18248"/>
    </ligandPart>
</feature>
<feature type="binding site" evidence="2">
    <location>
        <position position="201"/>
    </location>
    <ligand>
        <name>a ubiquinone</name>
        <dbReference type="ChEBI" id="CHEBI:16389"/>
    </ligand>
</feature>
<sequence length="379" mass="42627">MTNLRKTHPLMKIINNSFIDLPTPSNISSWWNFGSLLGICLIIQILTGLFLAMHYTSDTLTAFSSVTHICRDVNYGWLIRYLHANGASMFFICLFLHVGRGLYYGSYLFMETWNIGVLLLFAVMATAFMGYVLPWGQMSFWGATVITNLLSAIPYIGSDLVQWIWGGFSVDKATLTRFFAFHFILPFIIAALAGVHLLFLHETGSNNPSGISSDADKIPFHPYYTIKDILGILLLILTLASLVLFSPDLLGDPDNYTPANPLNTPPHIKPEWYFLFAYAILRSIPNKLGGVLALVLSILILILSPLLHTAKQRSMMFRPFSQCLFWILVADLLTLTWIGGQPVEHPFIIIGQVASILYFSLILIIMPITSLLENKMLKW</sequence>
<reference key="1">
    <citation type="submission" date="2004-04" db="EMBL/GenBank/DDBJ databases">
        <title>Molecular evidence for genetic subdivisions within the desert shrew, Notiosorex crawfordi.</title>
        <authorList>
            <person name="McAliley L.R."/>
            <person name="Oniell M.B."/>
            <person name="Baker R.J."/>
        </authorList>
    </citation>
    <scope>NUCLEOTIDE SEQUENCE [GENOMIC DNA]</scope>
    <source>
        <strain>Isolate MVZFC2652</strain>
        <strain>Isolate MVZFC2653</strain>
        <strain>Isolate TK90849</strain>
        <strain>Isolate TK90851</strain>
    </source>
</reference>
<gene>
    <name type="primary">MT-CYB</name>
    <name type="synonym">COB</name>
    <name type="synonym">CYTB</name>
    <name type="synonym">MTCYB</name>
</gene>
<proteinExistence type="inferred from homology"/>